<organism>
    <name type="scientific">Caenorhabditis elegans</name>
    <dbReference type="NCBI Taxonomy" id="6239"/>
    <lineage>
        <taxon>Eukaryota</taxon>
        <taxon>Metazoa</taxon>
        <taxon>Ecdysozoa</taxon>
        <taxon>Nematoda</taxon>
        <taxon>Chromadorea</taxon>
        <taxon>Rhabditida</taxon>
        <taxon>Rhabditina</taxon>
        <taxon>Rhabditomorpha</taxon>
        <taxon>Rhabditoidea</taxon>
        <taxon>Rhabditidae</taxon>
        <taxon>Peloderinae</taxon>
        <taxon>Caenorhabditis</taxon>
    </lineage>
</organism>
<protein>
    <recommendedName>
        <fullName>Deoxyribonuclease-2</fullName>
        <ecNumber>3.1.22.1</ecNumber>
    </recommendedName>
    <alternativeName>
        <fullName>Deoxyribonuclease II</fullName>
        <shortName>DNase II</shortName>
    </alternativeName>
</protein>
<dbReference type="EC" id="3.1.22.1"/>
<dbReference type="EMBL" id="Z46266">
    <property type="protein sequence ID" value="CAA86412.1"/>
    <property type="molecule type" value="Genomic_DNA"/>
</dbReference>
<dbReference type="PIR" id="T19038">
    <property type="entry name" value="T19038"/>
</dbReference>
<dbReference type="RefSeq" id="NP_509604.1">
    <property type="nucleotide sequence ID" value="NM_077203.9"/>
</dbReference>
<dbReference type="SMR" id="Q17778"/>
<dbReference type="BioGRID" id="46090">
    <property type="interactions" value="6"/>
</dbReference>
<dbReference type="FunCoup" id="Q17778">
    <property type="interactions" value="217"/>
</dbReference>
<dbReference type="STRING" id="6239.C07B5.5.1"/>
<dbReference type="GlyCosmos" id="Q17778">
    <property type="glycosylation" value="1 site, No reported glycans"/>
</dbReference>
<dbReference type="PaxDb" id="6239-C07B5.5"/>
<dbReference type="PeptideAtlas" id="Q17778"/>
<dbReference type="EnsemblMetazoa" id="C07B5.5.1">
    <property type="protein sequence ID" value="C07B5.5.1"/>
    <property type="gene ID" value="WBGene00003828"/>
</dbReference>
<dbReference type="GeneID" id="181174"/>
<dbReference type="KEGG" id="cel:CELE_C07B5.5"/>
<dbReference type="UCSC" id="C07B5.5">
    <property type="organism name" value="c. elegans"/>
</dbReference>
<dbReference type="AGR" id="WB:WBGene00003828"/>
<dbReference type="CTD" id="181174"/>
<dbReference type="WormBase" id="C07B5.5">
    <property type="protein sequence ID" value="CE00895"/>
    <property type="gene ID" value="WBGene00003828"/>
    <property type="gene designation" value="nuc-1"/>
</dbReference>
<dbReference type="eggNOG" id="KOG3825">
    <property type="taxonomic scope" value="Eukaryota"/>
</dbReference>
<dbReference type="GeneTree" id="ENSGT00390000002634"/>
<dbReference type="HOGENOM" id="CLU_053867_0_0_1"/>
<dbReference type="InParanoid" id="Q17778"/>
<dbReference type="OMA" id="DNTEDHS"/>
<dbReference type="OrthoDB" id="10261598at2759"/>
<dbReference type="PhylomeDB" id="Q17778"/>
<dbReference type="BRENDA" id="3.1.22.1">
    <property type="organism ID" value="1045"/>
</dbReference>
<dbReference type="PRO" id="PR:Q17778"/>
<dbReference type="Proteomes" id="UP000001940">
    <property type="component" value="Chromosome X"/>
</dbReference>
<dbReference type="Bgee" id="WBGene00003828">
    <property type="expression patterns" value="Expressed in material anatomical entity and 5 other cell types or tissues"/>
</dbReference>
<dbReference type="GO" id="GO:0005764">
    <property type="term" value="C:lysosome"/>
    <property type="evidence" value="ECO:0000314"/>
    <property type="project" value="WormBase"/>
</dbReference>
<dbReference type="GO" id="GO:0005634">
    <property type="term" value="C:nucleus"/>
    <property type="evidence" value="ECO:0000304"/>
    <property type="project" value="WormBase"/>
</dbReference>
<dbReference type="GO" id="GO:0004531">
    <property type="term" value="F:deoxyribonuclease II activity"/>
    <property type="evidence" value="ECO:0000315"/>
    <property type="project" value="WormBase"/>
</dbReference>
<dbReference type="GO" id="GO:0006309">
    <property type="term" value="P:apoptotic DNA fragmentation"/>
    <property type="evidence" value="ECO:0000315"/>
    <property type="project" value="WormBase"/>
</dbReference>
<dbReference type="GO" id="GO:0002785">
    <property type="term" value="P:negative regulation of antimicrobial peptide production"/>
    <property type="evidence" value="ECO:0000315"/>
    <property type="project" value="WormBase"/>
</dbReference>
<dbReference type="CDD" id="cd09120">
    <property type="entry name" value="PLDc_DNaseII_1"/>
    <property type="match status" value="1"/>
</dbReference>
<dbReference type="CDD" id="cd09121">
    <property type="entry name" value="PLDc_DNaseII_2"/>
    <property type="match status" value="1"/>
</dbReference>
<dbReference type="InterPro" id="IPR004947">
    <property type="entry name" value="DNase_II"/>
</dbReference>
<dbReference type="PANTHER" id="PTHR10858">
    <property type="entry name" value="DEOXYRIBONUCLEASE II"/>
    <property type="match status" value="1"/>
</dbReference>
<dbReference type="PANTHER" id="PTHR10858:SF31">
    <property type="entry name" value="DEOXYRIBONUCLEASE-2"/>
    <property type="match status" value="1"/>
</dbReference>
<dbReference type="Pfam" id="PF03265">
    <property type="entry name" value="DNase_II"/>
    <property type="match status" value="1"/>
</dbReference>
<reference key="1">
    <citation type="journal article" date="1998" name="Science">
        <title>Genome sequence of the nematode C. elegans: a platform for investigating biology.</title>
        <authorList>
            <consortium name="The C. elegans sequencing consortium"/>
        </authorList>
    </citation>
    <scope>NUCLEOTIDE SEQUENCE [LARGE SCALE GENOMIC DNA]</scope>
    <source>
        <strain>Bristol N2</strain>
    </source>
</reference>
<reference key="2">
    <citation type="journal article" date="2000" name="Gene">
        <title>The C. elegans apoptotic nuclease NUC-1 is related in sequence and activity to mammalian DNase II.</title>
        <authorList>
            <person name="Lyon C.J."/>
            <person name="Evans C.J."/>
            <person name="Bill B.R."/>
            <person name="Otsuka A.J."/>
            <person name="Aguilera R.J."/>
        </authorList>
    </citation>
    <scope>FUNCTION</scope>
</reference>
<gene>
    <name type="primary">nuc-1</name>
    <name type="ORF">C07B5.5</name>
</gene>
<feature type="signal peptide" evidence="1">
    <location>
        <begin position="1"/>
        <end position="21"/>
    </location>
</feature>
<feature type="chain" id="PRO_0000007299" description="Deoxyribonuclease-2">
    <location>
        <begin position="22"/>
        <end position="375"/>
    </location>
</feature>
<feature type="glycosylation site" description="N-linked (GlcNAc...) asparagine" evidence="1">
    <location>
        <position position="131"/>
    </location>
</feature>
<sequence length="375" mass="41541">MGLSPAAVLIFLLLGVSQTYAAFSCKDQSGNDVDWFAVYKMPIEKDDGSVTGLAGGVAWYYVDVNKKGTLTPSAKTLDDNDQAIAYTLQQYYDKQNDKTIFHVMYNDEPWGSKSTSGIKLEEILSNRVYSNYTHEDDSTSTAFGHTKGTIFFDGTSGVWLVHSVPLFPNPTKYEYPVSGHDYGQTMLCMTFKYAQLKSIGTQLFFNRPNIYSSNLPTNMAADNADLAKAIAGQYQKGQPFQSVIELETMAGYSFTNFAKSKEFNADLYDTLVAPTLKTDLVVETWRRGSEIPLDCKLTYHANDALSIHVGSTTAFSYTKDHSKMAHSADMTKPWVCIGDINRMTSQYVRGGGTTCISSSFLWKAYSVIATQNNCA</sequence>
<comment type="function">
    <text evidence="2">Hydrolyzes DNA under acidic conditions with a preference for double-stranded DNA. Implicated in apoptosis.</text>
</comment>
<comment type="catalytic activity">
    <reaction>
        <text>Endonucleolytic cleavage to nucleoside 3'-phosphates and 3'-phosphooligonucleotide end-products.</text>
        <dbReference type="EC" id="3.1.22.1"/>
    </reaction>
</comment>
<comment type="similarity">
    <text evidence="3">Belongs to the DNase II family.</text>
</comment>
<proteinExistence type="inferred from homology"/>
<name>NUC1_CAEEL</name>
<evidence type="ECO:0000255" key="1"/>
<evidence type="ECO:0000269" key="2">
    <source>
    </source>
</evidence>
<evidence type="ECO:0000305" key="3"/>
<keyword id="KW-0053">Apoptosis</keyword>
<keyword id="KW-0325">Glycoprotein</keyword>
<keyword id="KW-0378">Hydrolase</keyword>
<keyword id="KW-1185">Reference proteome</keyword>
<keyword id="KW-0732">Signal</keyword>
<accession>Q17778</accession>